<reference key="1">
    <citation type="journal article" date="2002" name="J. Bacteriol.">
        <title>Mosaic structure and molecular evolution of the leukotoxin operon (lktCABD) in Mannheimia (Pasteurella) haemolytica, Mannheimia glucosida, and Pasteurella trehalosi.</title>
        <authorList>
            <person name="Davies R.L."/>
            <person name="Campbell S."/>
            <person name="Whittam T.S."/>
        </authorList>
    </citation>
    <scope>NUCLEOTIDE SEQUENCE [GENOMIC DNA]</scope>
    <source>
        <strain>Serotype A2 / PH278</strain>
        <strain>Serotype A2 / PH292</strain>
        <strain>Serotype A2 / PH494</strain>
    </source>
</reference>
<evidence type="ECO:0000250" key="1"/>
<evidence type="ECO:0000255" key="2">
    <source>
        <dbReference type="PROSITE-ProRule" id="PRU00362"/>
    </source>
</evidence>
<evidence type="ECO:0000255" key="3">
    <source>
        <dbReference type="PROSITE-ProRule" id="PRU00434"/>
    </source>
</evidence>
<evidence type="ECO:0000255" key="4">
    <source>
        <dbReference type="PROSITE-ProRule" id="PRU00441"/>
    </source>
</evidence>
<evidence type="ECO:0000305" key="5"/>
<accession>Q93FG6</accession>
<accession>Q934E0</accession>
<accession>Q93FG8</accession>
<organism>
    <name type="scientific">Mannheimia haemolytica</name>
    <name type="common">Pasteurella haemolytica</name>
    <dbReference type="NCBI Taxonomy" id="75985"/>
    <lineage>
        <taxon>Bacteria</taxon>
        <taxon>Pseudomonadati</taxon>
        <taxon>Pseudomonadota</taxon>
        <taxon>Gammaproteobacteria</taxon>
        <taxon>Pasteurellales</taxon>
        <taxon>Pasteurellaceae</taxon>
        <taxon>Mannheimia</taxon>
    </lineage>
</organism>
<feature type="chain" id="PRO_0000092382" description="Leukotoxin translocation ATP-binding protein LktB">
    <location>
        <begin position="1"/>
        <end position="708"/>
    </location>
</feature>
<feature type="transmembrane region" description="Helical" evidence="4">
    <location>
        <begin position="159"/>
        <end position="179"/>
    </location>
</feature>
<feature type="transmembrane region" description="Helical" evidence="4">
    <location>
        <begin position="192"/>
        <end position="212"/>
    </location>
</feature>
<feature type="transmembrane region" description="Helical" evidence="4">
    <location>
        <begin position="270"/>
        <end position="290"/>
    </location>
</feature>
<feature type="transmembrane region" description="Helical" evidence="4">
    <location>
        <begin position="296"/>
        <end position="316"/>
    </location>
</feature>
<feature type="transmembrane region" description="Helical" evidence="4">
    <location>
        <begin position="389"/>
        <end position="409"/>
    </location>
</feature>
<feature type="domain" description="Peptidase C39" evidence="2">
    <location>
        <begin position="1"/>
        <end position="126"/>
    </location>
</feature>
<feature type="domain" description="ABC transmembrane type-1" evidence="4">
    <location>
        <begin position="155"/>
        <end position="437"/>
    </location>
</feature>
<feature type="domain" description="ABC transporter" evidence="2 3">
    <location>
        <begin position="469"/>
        <end position="704"/>
    </location>
</feature>
<feature type="binding site" evidence="2 3">
    <location>
        <begin position="503"/>
        <end position="510"/>
    </location>
    <ligand>
        <name>ATP</name>
        <dbReference type="ChEBI" id="CHEBI:30616"/>
    </ligand>
</feature>
<feature type="sequence variant" description="In strain: Serotype A2 / PH278 and Serotype A2 / PH494.">
    <original>S</original>
    <variation>A</variation>
    <location>
        <position position="46"/>
    </location>
</feature>
<feature type="sequence variant" description="In strain: Serotype A2 / PH494.">
    <original>I</original>
    <variation>V</variation>
    <location>
        <position position="65"/>
    </location>
</feature>
<feature type="sequence variant" description="In strain: Serotype A2 / PH494.">
    <original>N</original>
    <variation>D</variation>
    <location>
        <position position="101"/>
    </location>
</feature>
<feature type="sequence variant" description="In strain: Serotype A2 / PH494.">
    <original>Q</original>
    <variation>K</variation>
    <location>
        <position position="104"/>
    </location>
</feature>
<feature type="sequence variant" description="In strain: Serotype A2 / PH278.">
    <original>D</original>
    <variation>E</variation>
    <location>
        <position position="322"/>
    </location>
</feature>
<feature type="sequence variant" description="In strain: Serotype A2 / PH278 and Serotype A2 / PH494.">
    <original>Y</original>
    <variation>D</variation>
    <location>
        <position position="468"/>
    </location>
</feature>
<feature type="sequence variant" description="In strain: Serotype A2 / PH278.">
    <original>G</original>
    <variation>D</variation>
    <location>
        <position position="655"/>
    </location>
</feature>
<sequence>MEANHQRNDLGLVALTMLAQYHNISLNPEEIKHKFDLDGKGLSLTSWLLAAKSLALKAKHIKKEISRLHLVNLPALVWQDNGKHFLLVKVDTDNNRYLTYNLEQDAPQILSQDEFEACYQGQLILVTSRASVVGQLAKFDFTWFIPAVIKYRKIFLETLIVSIFLQIFALITPLFFQVVMDKVLVHRGFSTLNIITVALAIVIIFEIVLSGLRTYVFSHSTSRIDVELGAKLFRHLLSLPISYFENRRVGDTVARVRELDQIRNFLTGQALTSVLDLLFSFIFFAVMWYYSPKLTLVILGSLPCYILWSIFISPILRRRLDDKFARSADNQAFLVESVTAINMIKAMAVAPQMTDTWDKQLASYVSSSFRVTVLATIGQQGVQLIQKTVMVINLWLGAHLVISGDLSIGQLIAFNMLSGQVIAPVIRLAQLWQDFQQVGISVTRLGDVLNSPTEQYQGKLSLPEIKGYISFKNIRFRYKPDAPTILNNVNLEIRQGEVIGIVGRSGSGKSTLTKLLQRFYIPENGQVLIDGHDLALADPNWLRRQIGVVLQDNVLLNRSIRENIALSDPGMPMERVIYAAKLAGAHDFISELREGYNTIVGEQGAGLSGGQRQRIAIARALVNNPKILIFDEATSALDYESEHIIMQNMQKICQGRTVILIAHRLSTVKNADRIIVMEKGEIVEQGKHHELLQNSNGLYSYLHQLQLN</sequence>
<proteinExistence type="inferred from homology"/>
<comment type="function">
    <text evidence="5">Part of the ABC transporter complex LktBD involved in leukotoxin export. Transmembrane domains (TMD) form a pore in the inner membrane and the ATP-binding domain (NBD) is responsible for energy generation (Probable).</text>
</comment>
<comment type="catalytic activity">
    <reaction>
        <text>ATP + H2O + proteinSide 1 = ADP + phosphate + proteinSide 2.</text>
        <dbReference type="EC" id="7.4.2.5"/>
    </reaction>
</comment>
<comment type="subunit">
    <text evidence="1">Homodimer.</text>
</comment>
<comment type="subcellular location">
    <subcellularLocation>
        <location evidence="5">Cell inner membrane</location>
        <topology evidence="5">Multi-pass membrane protein</topology>
    </subcellularLocation>
</comment>
<comment type="domain">
    <text>In LktB the peptidase C39 domain, the ATP-binding domain (NBD) and the transmembrane domain (TMD) are fused.</text>
</comment>
<comment type="similarity">
    <text evidence="5">Belongs to the ABC transporter superfamily. Protein-1 exporter (TC 3.A.1.109) family.</text>
</comment>
<comment type="caution">
    <text evidence="5">Leu-10 is present instead of the conserved Cys which is expected to be the active site residue of peptidase C39. Thus this protein is presumed to be without peptidase activity.</text>
</comment>
<keyword id="KW-0067">ATP-binding</keyword>
<keyword id="KW-0997">Cell inner membrane</keyword>
<keyword id="KW-1003">Cell membrane</keyword>
<keyword id="KW-0472">Membrane</keyword>
<keyword id="KW-0547">Nucleotide-binding</keyword>
<keyword id="KW-1278">Translocase</keyword>
<keyword id="KW-0812">Transmembrane</keyword>
<keyword id="KW-1133">Transmembrane helix</keyword>
<keyword id="KW-0813">Transport</keyword>
<gene>
    <name type="primary">lktB</name>
</gene>
<protein>
    <recommendedName>
        <fullName>Leukotoxin translocation ATP-binding protein LktB</fullName>
        <ecNumber>7.4.2.5</ecNumber>
    </recommendedName>
</protein>
<dbReference type="EC" id="7.4.2.5"/>
<dbReference type="EMBL" id="AF314511">
    <property type="protein sequence ID" value="AAL12782.1"/>
    <property type="molecule type" value="Genomic_DNA"/>
</dbReference>
<dbReference type="EMBL" id="AF314514">
    <property type="protein sequence ID" value="AAL12791.1"/>
    <property type="molecule type" value="Genomic_DNA"/>
</dbReference>
<dbReference type="EMBL" id="AF314515">
    <property type="protein sequence ID" value="AAL12794.1"/>
    <property type="molecule type" value="Genomic_DNA"/>
</dbReference>
<dbReference type="RefSeq" id="WP_020831006.1">
    <property type="nucleotide sequence ID" value="NZ_VAIO01000006.1"/>
</dbReference>
<dbReference type="RefSeq" id="WP_032844367.1">
    <property type="nucleotide sequence ID" value="NZ_VAIL01000117.1"/>
</dbReference>
<dbReference type="SMR" id="Q93FG6"/>
<dbReference type="PATRIC" id="fig|75985.47.peg.432"/>
<dbReference type="GO" id="GO:0005886">
    <property type="term" value="C:plasma membrane"/>
    <property type="evidence" value="ECO:0007669"/>
    <property type="project" value="UniProtKB-SubCell"/>
</dbReference>
<dbReference type="GO" id="GO:0030256">
    <property type="term" value="C:type I protein secretion system complex"/>
    <property type="evidence" value="ECO:0007669"/>
    <property type="project" value="InterPro"/>
</dbReference>
<dbReference type="GO" id="GO:0140359">
    <property type="term" value="F:ABC-type transporter activity"/>
    <property type="evidence" value="ECO:0007669"/>
    <property type="project" value="InterPro"/>
</dbReference>
<dbReference type="GO" id="GO:0005524">
    <property type="term" value="F:ATP binding"/>
    <property type="evidence" value="ECO:0007669"/>
    <property type="project" value="UniProtKB-KW"/>
</dbReference>
<dbReference type="GO" id="GO:0016887">
    <property type="term" value="F:ATP hydrolysis activity"/>
    <property type="evidence" value="ECO:0007669"/>
    <property type="project" value="InterPro"/>
</dbReference>
<dbReference type="GO" id="GO:0034040">
    <property type="term" value="F:ATPase-coupled lipid transmembrane transporter activity"/>
    <property type="evidence" value="ECO:0007669"/>
    <property type="project" value="TreeGrafter"/>
</dbReference>
<dbReference type="GO" id="GO:0030253">
    <property type="term" value="P:protein secretion by the type I secretion system"/>
    <property type="evidence" value="ECO:0007669"/>
    <property type="project" value="InterPro"/>
</dbReference>
<dbReference type="GO" id="GO:0006508">
    <property type="term" value="P:proteolysis"/>
    <property type="evidence" value="ECO:0007669"/>
    <property type="project" value="InterPro"/>
</dbReference>
<dbReference type="CDD" id="cd18588">
    <property type="entry name" value="ABC_6TM_CyaB_HlyB_like"/>
    <property type="match status" value="1"/>
</dbReference>
<dbReference type="CDD" id="cd03252">
    <property type="entry name" value="ABCC_Hemolysin"/>
    <property type="match status" value="1"/>
</dbReference>
<dbReference type="CDD" id="cd02417">
    <property type="entry name" value="Peptidase_C39_likeA"/>
    <property type="match status" value="1"/>
</dbReference>
<dbReference type="FunFam" id="3.40.50.300:FF:000299">
    <property type="entry name" value="ABC transporter ATP-binding protein/permease"/>
    <property type="match status" value="1"/>
</dbReference>
<dbReference type="FunFam" id="1.20.1560.10:FF:000056">
    <property type="entry name" value="Alpha-hemolysin translocation ATP-binding protein HlyB"/>
    <property type="match status" value="1"/>
</dbReference>
<dbReference type="Gene3D" id="1.20.1560.10">
    <property type="entry name" value="ABC transporter type 1, transmembrane domain"/>
    <property type="match status" value="1"/>
</dbReference>
<dbReference type="Gene3D" id="3.90.70.10">
    <property type="entry name" value="Cysteine proteinases"/>
    <property type="match status" value="1"/>
</dbReference>
<dbReference type="Gene3D" id="3.40.50.300">
    <property type="entry name" value="P-loop containing nucleotide triphosphate hydrolases"/>
    <property type="match status" value="1"/>
</dbReference>
<dbReference type="InterPro" id="IPR003593">
    <property type="entry name" value="AAA+_ATPase"/>
</dbReference>
<dbReference type="InterPro" id="IPR011527">
    <property type="entry name" value="ABC1_TM_dom"/>
</dbReference>
<dbReference type="InterPro" id="IPR036640">
    <property type="entry name" value="ABC1_TM_sf"/>
</dbReference>
<dbReference type="InterPro" id="IPR003439">
    <property type="entry name" value="ABC_transporter-like_ATP-bd"/>
</dbReference>
<dbReference type="InterPro" id="IPR017871">
    <property type="entry name" value="ABC_transporter-like_CS"/>
</dbReference>
<dbReference type="InterPro" id="IPR010132">
    <property type="entry name" value="ATPase_T1SS_HlyB"/>
</dbReference>
<dbReference type="InterPro" id="IPR027417">
    <property type="entry name" value="P-loop_NTPase"/>
</dbReference>
<dbReference type="InterPro" id="IPR005074">
    <property type="entry name" value="Peptidase_C39"/>
</dbReference>
<dbReference type="InterPro" id="IPR039395">
    <property type="entry name" value="Peptidase_C39-like_A"/>
</dbReference>
<dbReference type="InterPro" id="IPR039421">
    <property type="entry name" value="Type_1_exporter"/>
</dbReference>
<dbReference type="NCBIfam" id="TIGR01846">
    <property type="entry name" value="type_I_sec_HlyB"/>
    <property type="match status" value="1"/>
</dbReference>
<dbReference type="PANTHER" id="PTHR24221">
    <property type="entry name" value="ATP-BINDING CASSETTE SUB-FAMILY B"/>
    <property type="match status" value="1"/>
</dbReference>
<dbReference type="PANTHER" id="PTHR24221:SF647">
    <property type="entry name" value="BLL6336 PROTEIN"/>
    <property type="match status" value="1"/>
</dbReference>
<dbReference type="Pfam" id="PF00664">
    <property type="entry name" value="ABC_membrane"/>
    <property type="match status" value="1"/>
</dbReference>
<dbReference type="Pfam" id="PF00005">
    <property type="entry name" value="ABC_tran"/>
    <property type="match status" value="1"/>
</dbReference>
<dbReference type="Pfam" id="PF03412">
    <property type="entry name" value="Peptidase_C39"/>
    <property type="match status" value="1"/>
</dbReference>
<dbReference type="SMART" id="SM00382">
    <property type="entry name" value="AAA"/>
    <property type="match status" value="1"/>
</dbReference>
<dbReference type="SUPFAM" id="SSF90123">
    <property type="entry name" value="ABC transporter transmembrane region"/>
    <property type="match status" value="1"/>
</dbReference>
<dbReference type="SUPFAM" id="SSF52540">
    <property type="entry name" value="P-loop containing nucleoside triphosphate hydrolases"/>
    <property type="match status" value="1"/>
</dbReference>
<dbReference type="PROSITE" id="PS50929">
    <property type="entry name" value="ABC_TM1F"/>
    <property type="match status" value="1"/>
</dbReference>
<dbReference type="PROSITE" id="PS00211">
    <property type="entry name" value="ABC_TRANSPORTER_1"/>
    <property type="match status" value="1"/>
</dbReference>
<dbReference type="PROSITE" id="PS50893">
    <property type="entry name" value="ABC_TRANSPORTER_2"/>
    <property type="match status" value="1"/>
</dbReference>
<dbReference type="PROSITE" id="PS50990">
    <property type="entry name" value="PEPTIDASE_C39"/>
    <property type="match status" value="1"/>
</dbReference>
<name>LKB2B_MANHA</name>